<protein>
    <recommendedName>
        <fullName evidence="1">Co-chaperone protein HscB homolog</fullName>
    </recommendedName>
</protein>
<comment type="function">
    <text evidence="1">Co-chaperone involved in the maturation of iron-sulfur cluster-containing proteins. Seems to help targeting proteins to be folded toward HscA.</text>
</comment>
<comment type="subunit">
    <text evidence="1">Interacts with HscA and stimulates its ATPase activity.</text>
</comment>
<comment type="similarity">
    <text evidence="1">Belongs to the HscB family.</text>
</comment>
<evidence type="ECO:0000255" key="1">
    <source>
        <dbReference type="HAMAP-Rule" id="MF_00682"/>
    </source>
</evidence>
<name>HSCB_BURVG</name>
<accession>A4JG01</accession>
<sequence length="175" mass="19572">MVSLKDSHFDLFHLPAQFALDDAALDDAYRTVQTQVHPDRFAAAGDAQKRIAMQWATRANEAYRTLRDPLQRASYLLSLRGVDIGAENNTAMEPAFLMQQMEWREGIEDAAAARNVDALDALLAELRDEKRVRIERLGTLLDSGADQAAAEAVRQLMFIERVASEVGAQIERLET</sequence>
<organism>
    <name type="scientific">Burkholderia vietnamiensis (strain G4 / LMG 22486)</name>
    <name type="common">Burkholderia cepacia (strain R1808)</name>
    <dbReference type="NCBI Taxonomy" id="269482"/>
    <lineage>
        <taxon>Bacteria</taxon>
        <taxon>Pseudomonadati</taxon>
        <taxon>Pseudomonadota</taxon>
        <taxon>Betaproteobacteria</taxon>
        <taxon>Burkholderiales</taxon>
        <taxon>Burkholderiaceae</taxon>
        <taxon>Burkholderia</taxon>
        <taxon>Burkholderia cepacia complex</taxon>
    </lineage>
</organism>
<gene>
    <name evidence="1" type="primary">hscB</name>
    <name type="ordered locus">Bcep1808_2202</name>
</gene>
<reference key="1">
    <citation type="submission" date="2007-03" db="EMBL/GenBank/DDBJ databases">
        <title>Complete sequence of chromosome 1 of Burkholderia vietnamiensis G4.</title>
        <authorList>
            <consortium name="US DOE Joint Genome Institute"/>
            <person name="Copeland A."/>
            <person name="Lucas S."/>
            <person name="Lapidus A."/>
            <person name="Barry K."/>
            <person name="Detter J.C."/>
            <person name="Glavina del Rio T."/>
            <person name="Hammon N."/>
            <person name="Israni S."/>
            <person name="Dalin E."/>
            <person name="Tice H."/>
            <person name="Pitluck S."/>
            <person name="Chain P."/>
            <person name="Malfatti S."/>
            <person name="Shin M."/>
            <person name="Vergez L."/>
            <person name="Schmutz J."/>
            <person name="Larimer F."/>
            <person name="Land M."/>
            <person name="Hauser L."/>
            <person name="Kyrpides N."/>
            <person name="Tiedje J."/>
            <person name="Richardson P."/>
        </authorList>
    </citation>
    <scope>NUCLEOTIDE SEQUENCE [LARGE SCALE GENOMIC DNA]</scope>
    <source>
        <strain>G4 / LMG 22486</strain>
    </source>
</reference>
<feature type="chain" id="PRO_1000083002" description="Co-chaperone protein HscB homolog">
    <location>
        <begin position="1"/>
        <end position="175"/>
    </location>
</feature>
<feature type="domain" description="J" evidence="1">
    <location>
        <begin position="7"/>
        <end position="79"/>
    </location>
</feature>
<dbReference type="EMBL" id="CP000614">
    <property type="protein sequence ID" value="ABO55204.1"/>
    <property type="molecule type" value="Genomic_DNA"/>
</dbReference>
<dbReference type="SMR" id="A4JG01"/>
<dbReference type="KEGG" id="bvi:Bcep1808_2202"/>
<dbReference type="eggNOG" id="COG1076">
    <property type="taxonomic scope" value="Bacteria"/>
</dbReference>
<dbReference type="HOGENOM" id="CLU_068529_2_1_4"/>
<dbReference type="Proteomes" id="UP000002287">
    <property type="component" value="Chromosome 1"/>
</dbReference>
<dbReference type="GO" id="GO:1990230">
    <property type="term" value="C:iron-sulfur cluster transfer complex"/>
    <property type="evidence" value="ECO:0007669"/>
    <property type="project" value="TreeGrafter"/>
</dbReference>
<dbReference type="GO" id="GO:0001671">
    <property type="term" value="F:ATPase activator activity"/>
    <property type="evidence" value="ECO:0007669"/>
    <property type="project" value="InterPro"/>
</dbReference>
<dbReference type="GO" id="GO:0051087">
    <property type="term" value="F:protein-folding chaperone binding"/>
    <property type="evidence" value="ECO:0007669"/>
    <property type="project" value="InterPro"/>
</dbReference>
<dbReference type="GO" id="GO:0044571">
    <property type="term" value="P:[2Fe-2S] cluster assembly"/>
    <property type="evidence" value="ECO:0007669"/>
    <property type="project" value="InterPro"/>
</dbReference>
<dbReference type="GO" id="GO:0051259">
    <property type="term" value="P:protein complex oligomerization"/>
    <property type="evidence" value="ECO:0007669"/>
    <property type="project" value="InterPro"/>
</dbReference>
<dbReference type="GO" id="GO:0006457">
    <property type="term" value="P:protein folding"/>
    <property type="evidence" value="ECO:0007669"/>
    <property type="project" value="UniProtKB-UniRule"/>
</dbReference>
<dbReference type="Gene3D" id="1.10.287.110">
    <property type="entry name" value="DnaJ domain"/>
    <property type="match status" value="1"/>
</dbReference>
<dbReference type="Gene3D" id="1.20.1280.20">
    <property type="entry name" value="HscB, C-terminal domain"/>
    <property type="match status" value="1"/>
</dbReference>
<dbReference type="HAMAP" id="MF_00682">
    <property type="entry name" value="HscB"/>
    <property type="match status" value="1"/>
</dbReference>
<dbReference type="InterPro" id="IPR001623">
    <property type="entry name" value="DnaJ_domain"/>
</dbReference>
<dbReference type="InterPro" id="IPR004640">
    <property type="entry name" value="HscB"/>
</dbReference>
<dbReference type="InterPro" id="IPR036386">
    <property type="entry name" value="HscB_C_sf"/>
</dbReference>
<dbReference type="InterPro" id="IPR009073">
    <property type="entry name" value="HscB_oligo_C"/>
</dbReference>
<dbReference type="InterPro" id="IPR036869">
    <property type="entry name" value="J_dom_sf"/>
</dbReference>
<dbReference type="NCBIfam" id="TIGR00714">
    <property type="entry name" value="hscB"/>
    <property type="match status" value="1"/>
</dbReference>
<dbReference type="NCBIfam" id="NF002935">
    <property type="entry name" value="PRK03578.1"/>
    <property type="match status" value="1"/>
</dbReference>
<dbReference type="PANTHER" id="PTHR14021">
    <property type="entry name" value="IRON-SULFUR CLUSTER CO-CHAPERONE PROTEIN HSCB"/>
    <property type="match status" value="1"/>
</dbReference>
<dbReference type="PANTHER" id="PTHR14021:SF15">
    <property type="entry name" value="IRON-SULFUR CLUSTER CO-CHAPERONE PROTEIN HSCB"/>
    <property type="match status" value="1"/>
</dbReference>
<dbReference type="Pfam" id="PF07743">
    <property type="entry name" value="HSCB_C"/>
    <property type="match status" value="1"/>
</dbReference>
<dbReference type="SMART" id="SM00271">
    <property type="entry name" value="DnaJ"/>
    <property type="match status" value="1"/>
</dbReference>
<dbReference type="SUPFAM" id="SSF46565">
    <property type="entry name" value="Chaperone J-domain"/>
    <property type="match status" value="1"/>
</dbReference>
<dbReference type="SUPFAM" id="SSF47144">
    <property type="entry name" value="HSC20 (HSCB), C-terminal oligomerisation domain"/>
    <property type="match status" value="1"/>
</dbReference>
<dbReference type="PROSITE" id="PS50076">
    <property type="entry name" value="DNAJ_2"/>
    <property type="match status" value="1"/>
</dbReference>
<keyword id="KW-0143">Chaperone</keyword>
<proteinExistence type="inferred from homology"/>